<dbReference type="EC" id="5.3.1.5" evidence="1"/>
<dbReference type="EMBL" id="CP000605">
    <property type="protein sequence ID" value="ACD99316.1"/>
    <property type="molecule type" value="Genomic_DNA"/>
</dbReference>
<dbReference type="RefSeq" id="WP_007052420.1">
    <property type="nucleotide sequence ID" value="NZ_AABM02000014.1"/>
</dbReference>
<dbReference type="SMR" id="B3DR33"/>
<dbReference type="KEGG" id="blj:BLD_1871"/>
<dbReference type="HOGENOM" id="CLU_037261_1_0_11"/>
<dbReference type="Proteomes" id="UP000002419">
    <property type="component" value="Chromosome"/>
</dbReference>
<dbReference type="GO" id="GO:0005737">
    <property type="term" value="C:cytoplasm"/>
    <property type="evidence" value="ECO:0007669"/>
    <property type="project" value="UniProtKB-SubCell"/>
</dbReference>
<dbReference type="GO" id="GO:0000287">
    <property type="term" value="F:magnesium ion binding"/>
    <property type="evidence" value="ECO:0007669"/>
    <property type="project" value="UniProtKB-UniRule"/>
</dbReference>
<dbReference type="GO" id="GO:0009045">
    <property type="term" value="F:xylose isomerase activity"/>
    <property type="evidence" value="ECO:0007669"/>
    <property type="project" value="UniProtKB-UniRule"/>
</dbReference>
<dbReference type="GO" id="GO:0042732">
    <property type="term" value="P:D-xylose metabolic process"/>
    <property type="evidence" value="ECO:0007669"/>
    <property type="project" value="UniProtKB-UniRule"/>
</dbReference>
<dbReference type="Gene3D" id="3.20.20.150">
    <property type="entry name" value="Divalent-metal-dependent TIM barrel enzymes"/>
    <property type="match status" value="1"/>
</dbReference>
<dbReference type="HAMAP" id="MF_00455">
    <property type="entry name" value="Xylose_isom_A"/>
    <property type="match status" value="1"/>
</dbReference>
<dbReference type="InterPro" id="IPR036237">
    <property type="entry name" value="Xyl_isomerase-like_sf"/>
</dbReference>
<dbReference type="InterPro" id="IPR013022">
    <property type="entry name" value="Xyl_isomerase-like_TIM-brl"/>
</dbReference>
<dbReference type="InterPro" id="IPR013452">
    <property type="entry name" value="Xylose_isom_bac"/>
</dbReference>
<dbReference type="InterPro" id="IPR001998">
    <property type="entry name" value="Xylose_isomerase"/>
</dbReference>
<dbReference type="NCBIfam" id="NF003998">
    <property type="entry name" value="PRK05474.1"/>
    <property type="match status" value="1"/>
</dbReference>
<dbReference type="NCBIfam" id="TIGR02630">
    <property type="entry name" value="xylose_isom_A"/>
    <property type="match status" value="1"/>
</dbReference>
<dbReference type="PANTHER" id="PTHR48408">
    <property type="match status" value="1"/>
</dbReference>
<dbReference type="PANTHER" id="PTHR48408:SF1">
    <property type="entry name" value="XYLOSE ISOMERASE"/>
    <property type="match status" value="1"/>
</dbReference>
<dbReference type="Pfam" id="PF01261">
    <property type="entry name" value="AP_endonuc_2"/>
    <property type="match status" value="1"/>
</dbReference>
<dbReference type="PRINTS" id="PR00688">
    <property type="entry name" value="XYLOSISMRASE"/>
</dbReference>
<dbReference type="SUPFAM" id="SSF51658">
    <property type="entry name" value="Xylose isomerase-like"/>
    <property type="match status" value="1"/>
</dbReference>
<dbReference type="PROSITE" id="PS51415">
    <property type="entry name" value="XYLOSE_ISOMERASE"/>
    <property type="match status" value="1"/>
</dbReference>
<accession>B3DR33</accession>
<evidence type="ECO:0000255" key="1">
    <source>
        <dbReference type="HAMAP-Rule" id="MF_00455"/>
    </source>
</evidence>
<comment type="catalytic activity">
    <reaction evidence="1">
        <text>alpha-D-xylose = alpha-D-xylulofuranose</text>
        <dbReference type="Rhea" id="RHEA:22816"/>
        <dbReference type="ChEBI" id="CHEBI:28518"/>
        <dbReference type="ChEBI" id="CHEBI:188998"/>
        <dbReference type="EC" id="5.3.1.5"/>
    </reaction>
</comment>
<comment type="cofactor">
    <cofactor evidence="1">
        <name>Mg(2+)</name>
        <dbReference type="ChEBI" id="CHEBI:18420"/>
    </cofactor>
    <text evidence="1">Binds 2 magnesium ions per subunit.</text>
</comment>
<comment type="subunit">
    <text evidence="1">Homotetramer.</text>
</comment>
<comment type="subcellular location">
    <subcellularLocation>
        <location evidence="1">Cytoplasm</location>
    </subcellularLocation>
</comment>
<comment type="similarity">
    <text evidence="1">Belongs to the xylose isomerase family.</text>
</comment>
<gene>
    <name evidence="1" type="primary">xylA</name>
    <name type="ordered locus">BLD_1871</name>
</gene>
<reference key="1">
    <citation type="journal article" date="2008" name="BMC Genomics">
        <title>Comparative genomic analysis of the gut bacterium Bifidobacterium longum reveals loci susceptible to deletion during pure culture growth.</title>
        <authorList>
            <person name="Lee J.H."/>
            <person name="Karamychev V.N."/>
            <person name="Kozyavkin S.A."/>
            <person name="Mills D."/>
            <person name="Pavlov A.R."/>
            <person name="Pavlova N.V."/>
            <person name="Polouchine N.N."/>
            <person name="Richardson P.M."/>
            <person name="Shakhova V.V."/>
            <person name="Slesarev A.I."/>
            <person name="Weimer B."/>
            <person name="O'Sullivan D.J."/>
        </authorList>
    </citation>
    <scope>NUCLEOTIDE SEQUENCE [LARGE SCALE GENOMIC DNA]</scope>
    <source>
        <strain>DJO10A</strain>
    </source>
</reference>
<proteinExistence type="inferred from homology"/>
<name>XYLA_BIFLD</name>
<keyword id="KW-0119">Carbohydrate metabolism</keyword>
<keyword id="KW-0963">Cytoplasm</keyword>
<keyword id="KW-0413">Isomerase</keyword>
<keyword id="KW-0460">Magnesium</keyword>
<keyword id="KW-0479">Metal-binding</keyword>
<keyword id="KW-0859">Xylose metabolism</keyword>
<protein>
    <recommendedName>
        <fullName evidence="1">Xylose isomerase</fullName>
        <ecNumber evidence="1">5.3.1.5</ecNumber>
    </recommendedName>
</protein>
<sequence length="449" mass="50918">MGLWDVDKIEYVGRAKGPKEDFAFHYYDADKVVAGKKMKDWLRFGVAWWHTFNQELVDPFGTGTAHRPYYKYTDPMDQALAKVDYAFELFQKLGVEYFCFHDRDIAPEGDTLRETNANLDKVVDKIEENMKSTGVKLLWNTSSLFTNPRFVSGAATSPFADIYAYAGGQLKKSLEIGKRLGAENYVFWGGREGYENLWNTEMKRETDHIAKFFHMCADYAKEIGFEAQFLIEPKPKEPTLHQYDFDAATAIEFLRNHDLTDVFKLNLEGNHANLAGHTYQHEIRVARESGFLGSLDANQGDKLIGWDMDEFPTDLYETVAVMWEVLQAGSIGPHGGLNFDAKPRRTSFYEEDLFRSHIAGMDTYAAGLLVADKMNQDGFIQDLMAERYSSYDSGIGKDIDEGNVTLADLEAYSLDKPQSELIAATKSDHLESVKATINNYIIDALSEVE</sequence>
<organism>
    <name type="scientific">Bifidobacterium longum (strain DJO10A)</name>
    <dbReference type="NCBI Taxonomy" id="205913"/>
    <lineage>
        <taxon>Bacteria</taxon>
        <taxon>Bacillati</taxon>
        <taxon>Actinomycetota</taxon>
        <taxon>Actinomycetes</taxon>
        <taxon>Bifidobacteriales</taxon>
        <taxon>Bifidobacteriaceae</taxon>
        <taxon>Bifidobacterium</taxon>
    </lineage>
</organism>
<feature type="chain" id="PRO_1000200278" description="Xylose isomerase">
    <location>
        <begin position="1"/>
        <end position="449"/>
    </location>
</feature>
<feature type="active site" evidence="1">
    <location>
        <position position="101"/>
    </location>
</feature>
<feature type="active site" evidence="1">
    <location>
        <position position="104"/>
    </location>
</feature>
<feature type="binding site" evidence="1">
    <location>
        <position position="232"/>
    </location>
    <ligand>
        <name>Mg(2+)</name>
        <dbReference type="ChEBI" id="CHEBI:18420"/>
        <label>1</label>
    </ligand>
</feature>
<feature type="binding site" evidence="1">
    <location>
        <position position="268"/>
    </location>
    <ligand>
        <name>Mg(2+)</name>
        <dbReference type="ChEBI" id="CHEBI:18420"/>
        <label>1</label>
    </ligand>
</feature>
<feature type="binding site" evidence="1">
    <location>
        <position position="268"/>
    </location>
    <ligand>
        <name>Mg(2+)</name>
        <dbReference type="ChEBI" id="CHEBI:18420"/>
        <label>2</label>
    </ligand>
</feature>
<feature type="binding site" evidence="1">
    <location>
        <position position="271"/>
    </location>
    <ligand>
        <name>Mg(2+)</name>
        <dbReference type="ChEBI" id="CHEBI:18420"/>
        <label>2</label>
    </ligand>
</feature>
<feature type="binding site" evidence="1">
    <location>
        <position position="296"/>
    </location>
    <ligand>
        <name>Mg(2+)</name>
        <dbReference type="ChEBI" id="CHEBI:18420"/>
        <label>1</label>
    </ligand>
</feature>
<feature type="binding site" evidence="1">
    <location>
        <position position="307"/>
    </location>
    <ligand>
        <name>Mg(2+)</name>
        <dbReference type="ChEBI" id="CHEBI:18420"/>
        <label>2</label>
    </ligand>
</feature>
<feature type="binding site" evidence="1">
    <location>
        <position position="309"/>
    </location>
    <ligand>
        <name>Mg(2+)</name>
        <dbReference type="ChEBI" id="CHEBI:18420"/>
        <label>2</label>
    </ligand>
</feature>
<feature type="binding site" evidence="1">
    <location>
        <position position="340"/>
    </location>
    <ligand>
        <name>Mg(2+)</name>
        <dbReference type="ChEBI" id="CHEBI:18420"/>
        <label>1</label>
    </ligand>
</feature>